<organism>
    <name type="scientific">Penicillium rubens (strain ATCC 28089 / DSM 1075 / NRRL 1951 / Wisconsin 54-1255)</name>
    <name type="common">Penicillium chrysogenum</name>
    <dbReference type="NCBI Taxonomy" id="500485"/>
    <lineage>
        <taxon>Eukaryota</taxon>
        <taxon>Fungi</taxon>
        <taxon>Dikarya</taxon>
        <taxon>Ascomycota</taxon>
        <taxon>Pezizomycotina</taxon>
        <taxon>Eurotiomycetes</taxon>
        <taxon>Eurotiomycetidae</taxon>
        <taxon>Eurotiales</taxon>
        <taxon>Aspergillaceae</taxon>
        <taxon>Penicillium</taxon>
        <taxon>Penicillium chrysogenum species complex</taxon>
    </lineage>
</organism>
<reference key="1">
    <citation type="journal article" date="2008" name="Nat. Biotechnol.">
        <title>Genome sequencing and analysis of the filamentous fungus Penicillium chrysogenum.</title>
        <authorList>
            <person name="van den Berg M.A."/>
            <person name="Albang R."/>
            <person name="Albermann K."/>
            <person name="Badger J.H."/>
            <person name="Daran J.-M."/>
            <person name="Driessen A.J.M."/>
            <person name="Garcia-Estrada C."/>
            <person name="Fedorova N.D."/>
            <person name="Harris D.M."/>
            <person name="Heijne W.H.M."/>
            <person name="Joardar V.S."/>
            <person name="Kiel J.A.K.W."/>
            <person name="Kovalchuk A."/>
            <person name="Martin J.F."/>
            <person name="Nierman W.C."/>
            <person name="Nijland J.G."/>
            <person name="Pronk J.T."/>
            <person name="Roubos J.A."/>
            <person name="van der Klei I.J."/>
            <person name="van Peij N.N.M.E."/>
            <person name="Veenhuis M."/>
            <person name="von Doehren H."/>
            <person name="Wagner C."/>
            <person name="Wortman J.R."/>
            <person name="Bovenberg R.A.L."/>
        </authorList>
    </citation>
    <scope>NUCLEOTIDE SEQUENCE [LARGE SCALE GENOMIC DNA]</scope>
    <source>
        <strain>ATCC 28089 / DSM 1075 / NRRL 1951 / Wisconsin 54-1255</strain>
    </source>
</reference>
<reference key="2">
    <citation type="journal article" date="2010" name="Eukaryot. Cell">
        <title>Two components of a velvet-like complex control hyphal morphogenesis, conidiophore development, and penicillin biosynthesis in Penicillium chrysogenum.</title>
        <authorList>
            <person name="Hoff B."/>
            <person name="Kamerewerd J."/>
            <person name="Sigl C."/>
            <person name="Mitterbauer R."/>
            <person name="Zadra I."/>
            <person name="Kuernsteiner H."/>
            <person name="Kueck U."/>
        </authorList>
    </citation>
    <scope>FUNCTION</scope>
    <scope>DISRUPTION PHENOTYPE</scope>
    <scope>INTERACTION WITH LAEA; VELB AND KAPA</scope>
    <scope>SUBCELLULAR LOCATION</scope>
</reference>
<reference key="3">
    <citation type="journal article" date="2011" name="Microbiology">
        <title>PcchiB1, encoding a class V chitinase, is affected by PcVelA and PcLaeA, and is responsible for cell wall integrity in Penicillium chrysogenum.</title>
        <authorList>
            <person name="Kamerewerd J."/>
            <person name="Zadra I."/>
            <person name="Kuernsteiner H."/>
            <person name="Kueck U."/>
        </authorList>
    </citation>
    <scope>FUNCTION</scope>
    <scope>DISRUPTION PHENOTYPE</scope>
</reference>
<reference key="4">
    <citation type="journal article" date="2012" name="OMICS">
        <title>Impact of velvet complex on transcriptome and penicillin G production in glucose-limited chemostat cultures of a beta-lactam high-producing Penicillium chrysogenum strain.</title>
        <authorList>
            <person name="Veiga T."/>
            <person name="Nijland J.G."/>
            <person name="Driessen A.J."/>
            <person name="Bovenberg R.A."/>
            <person name="Touw H."/>
            <person name="van den Berg M.A."/>
            <person name="Pronk J.T."/>
            <person name="Daran J.M."/>
        </authorList>
    </citation>
    <scope>FUNCTION</scope>
</reference>
<reference key="5">
    <citation type="journal article" date="2013" name="Eukaryot. Cell">
        <title>Members of the Penicillium chrysogenum velvet complex play functionally opposing roles in the regulation of penicillin biosynthesis and conidiation.</title>
        <authorList>
            <person name="Kopke K."/>
            <person name="Hoff B."/>
            <person name="Bloemendal S."/>
            <person name="Katschorowski A."/>
            <person name="Kamerewerd J."/>
            <person name="Kueck U."/>
        </authorList>
    </citation>
    <scope>FUNCTION</scope>
    <scope>DISRUPTION PHENOTYPE</scope>
    <scope>SUBCELLULAR LOCATION</scope>
    <scope>INTERACTION WITH VOSA AND VELC</scope>
</reference>
<reference key="6">
    <citation type="journal article" date="2015" name="J. Basic Microbiol.">
        <title>Microarray hybridization analysis of light-dependent gene expression in Penicillium chrysogenum identifies bZIP transcription factor PcAtfA.</title>
        <authorList>
            <person name="Wolfers S."/>
            <person name="Kamerewerd J."/>
            <person name="Nowrousian M."/>
            <person name="Sigl C."/>
            <person name="Zadra I."/>
            <person name="Kuernsteiner H."/>
            <person name="Kueck U."/>
            <person name="Bloemendal S."/>
        </authorList>
    </citation>
    <scope>FUNCTION</scope>
    <scope>DISRUPTION PHENOTYPE</scope>
</reference>
<gene>
    <name evidence="9" type="primary">velA</name>
    <name type="ORF">PCH_Pc13g13200</name>
</gene>
<comment type="function">
    <text evidence="4 5 6 8">Component of the velvet transcription factor complex that controls sexual/asexual developmental ratio in response to light, promoting sexual development in the darkness while stimulating asexual sporulation under illumination (PubMed:20543063). The velvet complex acts as a global regulator for secondary metabolite gene expression (PubMed:22439693). Controls the expression of the penicillin gene cluster (PubMed:20543063, PubMed:22439693). Positively controls the expression of the class V chitinase chiB1 (PubMed:21816879). Positively controls the expression of the transcription factor atfA (PubMed:25557366). Required for cell wall integrity and controls hyphal branching (PubMed:20543063).</text>
</comment>
<comment type="subunit">
    <text evidence="4 7">Component of the heterotrimeric velvet complex composed of laeA, veA and velB; velA acting as a bridging protein between laeA and velB (PubMed:20543063). Interacts with kapA (PubMed:20543063). Interacts with vosA and velc (PubMed:23264641).</text>
</comment>
<comment type="subcellular location">
    <subcellularLocation>
        <location evidence="4 7">Nucleus</location>
    </subcellularLocation>
    <subcellularLocation>
        <location evidence="1">Cytoplasm</location>
    </subcellularLocation>
    <text evidence="1">Enriched in the nucleus in the dark (By similarity).</text>
</comment>
<comment type="domain">
    <text evidence="1">The C-terminal PEST domain is a region rich in proline, glutamic acid, serine and threonine residues that is required for the light-dependent regulation of development and secondary metabolism (By similarity).</text>
</comment>
<comment type="disruption phenotype">
    <text evidence="4 5 8">Substantially down-regulates penicillin biosynthesis genes pcbAB, pcbC, and penDE (PubMed:20543063). Up-regulates expression of laeA (PubMed:20543063). Leads to light-independent conidial formation, dichotomous branching of hyphae, and pellet formation in shaking cultures (PubMed:20543063). Decreases the expression of the class V chitinase chiB1 (PubMed:21816879). Decreases the expression of the transcription factor atfA (PubMed:25557366).</text>
</comment>
<comment type="similarity">
    <text evidence="10">Belongs to the velvet family. VeA subfamily.</text>
</comment>
<accession>B6H3B2</accession>
<feature type="chain" id="PRO_0000435906" description="Developmental and secondary metabolism regulator veA">
    <location>
        <begin position="1"/>
        <end position="561"/>
    </location>
</feature>
<feature type="domain" description="Velvet" evidence="2">
    <location>
        <begin position="25"/>
        <end position="233"/>
    </location>
</feature>
<feature type="region of interest" description="Disordered" evidence="3">
    <location>
        <begin position="1"/>
        <end position="23"/>
    </location>
</feature>
<feature type="region of interest" description="Disordered" evidence="3">
    <location>
        <begin position="41"/>
        <end position="60"/>
    </location>
</feature>
<feature type="region of interest" description="Disordered" evidence="3">
    <location>
        <begin position="258"/>
        <end position="361"/>
    </location>
</feature>
<feature type="region of interest" description="PEST" evidence="1">
    <location>
        <begin position="438"/>
        <end position="485"/>
    </location>
</feature>
<feature type="region of interest" description="Disordered" evidence="3">
    <location>
        <begin position="491"/>
        <end position="524"/>
    </location>
</feature>
<feature type="short sequence motif" description="Nuclear localization signal" evidence="1">
    <location>
        <begin position="39"/>
        <end position="44"/>
    </location>
</feature>
<feature type="compositionally biased region" description="Basic and acidic residues" evidence="3">
    <location>
        <begin position="12"/>
        <end position="23"/>
    </location>
</feature>
<feature type="compositionally biased region" description="Basic and acidic residues" evidence="3">
    <location>
        <begin position="258"/>
        <end position="268"/>
    </location>
</feature>
<feature type="compositionally biased region" description="Polar residues" evidence="3">
    <location>
        <begin position="324"/>
        <end position="339"/>
    </location>
</feature>
<feature type="compositionally biased region" description="Pro residues" evidence="3">
    <location>
        <begin position="347"/>
        <end position="357"/>
    </location>
</feature>
<feature type="compositionally biased region" description="Basic and acidic residues" evidence="3">
    <location>
        <begin position="497"/>
        <end position="509"/>
    </location>
</feature>
<sequence>MANRPSLMPPHNETEHSVSRITREGKQLTYKLSVMQQPERARACGAGAKSSADRRPVDPPPVVELRIFESDPANDTQKTDITFAYNANFFLYATLETARPIAHGRVGGPQSCPVLTGVPVAGVAYLDRPSQAGYFIFPDLSVRHEGRYRLSFHLYEEIKDAKDADKDSTLPLPNQIPLSATSKPGIPQAFLHFRLEVKSVPFTVYSAKKFPGLATSTSLSRIIAEQGCRVRIRRDVRMRRRGDKRDEDYEFGEERAAAYARSSDRFTTPDRYAASMDRPRSNSNGSNIESPYGFVPPDRRPSAPDYGFQCPQPYQRPMPPAPMSHSQTPSYQSHLSFGSTPSHYPAPHMPPTPPPVAPQGIYSPQHAYAQIRHPSNGSEYEGTPIAYPAPQIPVERGGYPKPPMSSYAMDPPKPNSYMDPRMPEPSLYPSTPNVPVSRPQTPNLPAMPPPKPLSNDYANHVVPSVECTSPGGSGGGGYDNVRGKRMVYQTGPTYGKRSHEDTFGLDDRSMQNGMRPDTEPYPAYRDFSGESRAALMAEMGIQLSYKRANGKIVMKAPPSST</sequence>
<proteinExistence type="evidence at protein level"/>
<dbReference type="EMBL" id="AM920428">
    <property type="protein sequence ID" value="CAP92389.1"/>
    <property type="molecule type" value="Genomic_DNA"/>
</dbReference>
<dbReference type="RefSeq" id="XP_002559734.1">
    <property type="nucleotide sequence ID" value="XM_002559688.1"/>
</dbReference>
<dbReference type="SMR" id="B6H3B2"/>
<dbReference type="STRING" id="500485.B6H3B2"/>
<dbReference type="KEGG" id="pcs:N7525_002707"/>
<dbReference type="VEuPathDB" id="FungiDB:PCH_Pc13g13200"/>
<dbReference type="eggNOG" id="ENOG502QVY9">
    <property type="taxonomic scope" value="Eukaryota"/>
</dbReference>
<dbReference type="HOGENOM" id="CLU_022491_2_0_1"/>
<dbReference type="OMA" id="KPNSYMD"/>
<dbReference type="OrthoDB" id="5384689at2759"/>
<dbReference type="BioCyc" id="PCHR:PC13G13200-MONOMER"/>
<dbReference type="Proteomes" id="UP000000724">
    <property type="component" value="Contig Pc00c13"/>
</dbReference>
<dbReference type="GO" id="GO:0005737">
    <property type="term" value="C:cytoplasm"/>
    <property type="evidence" value="ECO:0007669"/>
    <property type="project" value="UniProtKB-SubCell"/>
</dbReference>
<dbReference type="GO" id="GO:0005634">
    <property type="term" value="C:nucleus"/>
    <property type="evidence" value="ECO:0007669"/>
    <property type="project" value="UniProtKB-SubCell"/>
</dbReference>
<dbReference type="GO" id="GO:0030435">
    <property type="term" value="P:sporulation resulting in formation of a cellular spore"/>
    <property type="evidence" value="ECO:0007669"/>
    <property type="project" value="UniProtKB-KW"/>
</dbReference>
<dbReference type="FunFam" id="2.60.40.3960:FF:000001">
    <property type="entry name" value="Sexual development activator VeA"/>
    <property type="match status" value="1"/>
</dbReference>
<dbReference type="Gene3D" id="2.60.40.3960">
    <property type="entry name" value="Velvet domain"/>
    <property type="match status" value="1"/>
</dbReference>
<dbReference type="InterPro" id="IPR021740">
    <property type="entry name" value="Velvet"/>
</dbReference>
<dbReference type="InterPro" id="IPR037525">
    <property type="entry name" value="Velvet_dom"/>
</dbReference>
<dbReference type="InterPro" id="IPR038491">
    <property type="entry name" value="Velvet_dom_sf"/>
</dbReference>
<dbReference type="PANTHER" id="PTHR33572:SF14">
    <property type="entry name" value="DEVELOPMENTAL AND SECONDARY METABOLISM REGULATOR VEA"/>
    <property type="match status" value="1"/>
</dbReference>
<dbReference type="PANTHER" id="PTHR33572">
    <property type="entry name" value="SPORE DEVELOPMENT REGULATOR VOSA"/>
    <property type="match status" value="1"/>
</dbReference>
<dbReference type="Pfam" id="PF11754">
    <property type="entry name" value="Velvet"/>
    <property type="match status" value="2"/>
</dbReference>
<dbReference type="PROSITE" id="PS51821">
    <property type="entry name" value="VELVET"/>
    <property type="match status" value="1"/>
</dbReference>
<name>VEA_PENRW</name>
<evidence type="ECO:0000250" key="1">
    <source>
        <dbReference type="UniProtKB" id="C8VTV4"/>
    </source>
</evidence>
<evidence type="ECO:0000255" key="2">
    <source>
        <dbReference type="PROSITE-ProRule" id="PRU01165"/>
    </source>
</evidence>
<evidence type="ECO:0000256" key="3">
    <source>
        <dbReference type="SAM" id="MobiDB-lite"/>
    </source>
</evidence>
<evidence type="ECO:0000269" key="4">
    <source>
    </source>
</evidence>
<evidence type="ECO:0000269" key="5">
    <source>
    </source>
</evidence>
<evidence type="ECO:0000269" key="6">
    <source>
    </source>
</evidence>
<evidence type="ECO:0000269" key="7">
    <source>
    </source>
</evidence>
<evidence type="ECO:0000269" key="8">
    <source>
    </source>
</evidence>
<evidence type="ECO:0000303" key="9">
    <source>
    </source>
</evidence>
<evidence type="ECO:0000305" key="10"/>
<keyword id="KW-0963">Cytoplasm</keyword>
<keyword id="KW-0539">Nucleus</keyword>
<keyword id="KW-1185">Reference proteome</keyword>
<keyword id="KW-0749">Sporulation</keyword>
<keyword id="KW-0804">Transcription</keyword>
<keyword id="KW-0805">Transcription regulation</keyword>
<protein>
    <recommendedName>
        <fullName evidence="10">Developmental and secondary metabolism regulator veA</fullName>
    </recommendedName>
    <alternativeName>
        <fullName evidence="10">Velvet complex subunit A</fullName>
    </alternativeName>
</protein>